<proteinExistence type="evidence at protein level"/>
<gene>
    <name evidence="11" type="primary">Plcb2</name>
</gene>
<dbReference type="EC" id="3.1.4.11" evidence="2"/>
<dbReference type="EMBL" id="AY902324">
    <property type="protein sequence ID" value="AAX90609.1"/>
    <property type="molecule type" value="Genomic_DNA"/>
</dbReference>
<dbReference type="EMBL" id="AK045469">
    <property type="protein sequence ID" value="BAC32384.1"/>
    <property type="molecule type" value="mRNA"/>
</dbReference>
<dbReference type="EMBL" id="AK169442">
    <property type="protein sequence ID" value="BAE41180.1"/>
    <property type="molecule type" value="mRNA"/>
</dbReference>
<dbReference type="EMBL" id="AL772255">
    <property type="status" value="NOT_ANNOTATED_CDS"/>
    <property type="molecule type" value="Genomic_DNA"/>
</dbReference>
<dbReference type="CCDS" id="CCDS16582.1">
    <molecule id="A3KGF7-1"/>
</dbReference>
<dbReference type="RefSeq" id="NP_001277719.1">
    <property type="nucleotide sequence ID" value="NM_001290790.1"/>
</dbReference>
<dbReference type="RefSeq" id="NP_808236.2">
    <molecule id="A3KGF7-1"/>
    <property type="nucleotide sequence ID" value="NM_177568.2"/>
</dbReference>
<dbReference type="SMR" id="A3KGF7"/>
<dbReference type="BioGRID" id="202233">
    <property type="interactions" value="3"/>
</dbReference>
<dbReference type="CORUM" id="A3KGF7"/>
<dbReference type="FunCoup" id="A3KGF7">
    <property type="interactions" value="1942"/>
</dbReference>
<dbReference type="IntAct" id="A3KGF7">
    <property type="interactions" value="6"/>
</dbReference>
<dbReference type="STRING" id="10090.ENSMUSP00000099583"/>
<dbReference type="iPTMnet" id="A3KGF7"/>
<dbReference type="PhosphoSitePlus" id="A3KGF7"/>
<dbReference type="PaxDb" id="10090-ENSMUSP00000099583"/>
<dbReference type="PeptideAtlas" id="A3KGF7"/>
<dbReference type="ProteomicsDB" id="289525">
    <molecule id="A3KGF7-1"/>
</dbReference>
<dbReference type="ProteomicsDB" id="289526">
    <molecule id="A3KGF7-2"/>
</dbReference>
<dbReference type="ProteomicsDB" id="289527">
    <molecule id="A3KGF7-3"/>
</dbReference>
<dbReference type="ProteomicsDB" id="289528">
    <molecule id="A3KGF7-4"/>
</dbReference>
<dbReference type="Antibodypedia" id="4002">
    <property type="antibodies" value="183 antibodies from 28 providers"/>
</dbReference>
<dbReference type="DNASU" id="18796"/>
<dbReference type="Ensembl" id="ENSMUST00000102524.8">
    <molecule id="A3KGF7-1"/>
    <property type="protein sequence ID" value="ENSMUSP00000099583.2"/>
    <property type="gene ID" value="ENSMUSG00000040061.18"/>
</dbReference>
<dbReference type="GeneID" id="18796"/>
<dbReference type="KEGG" id="mmu:18796"/>
<dbReference type="UCSC" id="uc008lsi.1">
    <molecule id="A3KGF7-1"/>
    <property type="organism name" value="mouse"/>
</dbReference>
<dbReference type="UCSC" id="uc008lsk.1">
    <molecule id="A3KGF7-2"/>
    <property type="organism name" value="mouse"/>
</dbReference>
<dbReference type="UCSC" id="uc008lsl.1">
    <molecule id="A3KGF7-4"/>
    <property type="organism name" value="mouse"/>
</dbReference>
<dbReference type="AGR" id="MGI:107465"/>
<dbReference type="CTD" id="5330"/>
<dbReference type="MGI" id="MGI:107465">
    <property type="gene designation" value="Plcb2"/>
</dbReference>
<dbReference type="VEuPathDB" id="HostDB:ENSMUSG00000040061"/>
<dbReference type="eggNOG" id="KOG1265">
    <property type="taxonomic scope" value="Eukaryota"/>
</dbReference>
<dbReference type="GeneTree" id="ENSGT00940000159326"/>
<dbReference type="HOGENOM" id="CLU_002738_2_0_1"/>
<dbReference type="InParanoid" id="A3KGF7"/>
<dbReference type="OMA" id="ERCEHTY"/>
<dbReference type="OrthoDB" id="269822at2759"/>
<dbReference type="PhylomeDB" id="A3KGF7"/>
<dbReference type="TreeFam" id="TF313216"/>
<dbReference type="Reactome" id="R-MMU-112043">
    <property type="pathway name" value="PLC beta mediated events"/>
</dbReference>
<dbReference type="Reactome" id="R-MMU-1855204">
    <property type="pathway name" value="Synthesis of IP3 and IP4 in the cytosol"/>
</dbReference>
<dbReference type="Reactome" id="R-MMU-399997">
    <property type="pathway name" value="Acetylcholine regulates insulin secretion"/>
</dbReference>
<dbReference type="Reactome" id="R-MMU-4086398">
    <property type="pathway name" value="Ca2+ pathway"/>
</dbReference>
<dbReference type="Reactome" id="R-MMU-416476">
    <property type="pathway name" value="G alpha (q) signalling events"/>
</dbReference>
<dbReference type="Reactome" id="R-MMU-418217">
    <property type="pathway name" value="G beta:gamma signalling through PLC beta"/>
</dbReference>
<dbReference type="Reactome" id="R-MMU-434316">
    <property type="pathway name" value="Fatty Acids bound to GPR40 (FFAR1) regulate insulin secretion"/>
</dbReference>
<dbReference type="Reactome" id="R-MMU-500657">
    <property type="pathway name" value="Presynaptic function of Kainate receptors"/>
</dbReference>
<dbReference type="BioGRID-ORCS" id="18796">
    <property type="hits" value="1 hit in 81 CRISPR screens"/>
</dbReference>
<dbReference type="ChiTaRS" id="Plcb2">
    <property type="organism name" value="mouse"/>
</dbReference>
<dbReference type="PRO" id="PR:A3KGF7"/>
<dbReference type="Proteomes" id="UP000000589">
    <property type="component" value="Chromosome 2"/>
</dbReference>
<dbReference type="RNAct" id="A3KGF7">
    <property type="molecule type" value="protein"/>
</dbReference>
<dbReference type="Bgee" id="ENSMUSG00000040061">
    <property type="expression patterns" value="Expressed in granulocyte and 89 other cell types or tissues"/>
</dbReference>
<dbReference type="ExpressionAtlas" id="A3KGF7">
    <property type="expression patterns" value="baseline and differential"/>
</dbReference>
<dbReference type="GO" id="GO:0005737">
    <property type="term" value="C:cytoplasm"/>
    <property type="evidence" value="ECO:0000314"/>
    <property type="project" value="MGI"/>
</dbReference>
<dbReference type="GO" id="GO:0031680">
    <property type="term" value="C:G-protein beta/gamma-subunit complex"/>
    <property type="evidence" value="ECO:0007669"/>
    <property type="project" value="Ensembl"/>
</dbReference>
<dbReference type="GO" id="GO:0098992">
    <property type="term" value="C:neuronal dense core vesicle"/>
    <property type="evidence" value="ECO:0000314"/>
    <property type="project" value="SynGO"/>
</dbReference>
<dbReference type="GO" id="GO:0005509">
    <property type="term" value="F:calcium ion binding"/>
    <property type="evidence" value="ECO:0007669"/>
    <property type="project" value="InterPro"/>
</dbReference>
<dbReference type="GO" id="GO:0031683">
    <property type="term" value="F:G-protein beta/gamma-subunit complex binding"/>
    <property type="evidence" value="ECO:0007669"/>
    <property type="project" value="Ensembl"/>
</dbReference>
<dbReference type="GO" id="GO:0004435">
    <property type="term" value="F:phosphatidylinositol-4,5-bisphosphate phospholipase C activity"/>
    <property type="evidence" value="ECO:0000250"/>
    <property type="project" value="UniProtKB"/>
</dbReference>
<dbReference type="GO" id="GO:0005543">
    <property type="term" value="F:phospholipid binding"/>
    <property type="evidence" value="ECO:0007669"/>
    <property type="project" value="Ensembl"/>
</dbReference>
<dbReference type="GO" id="GO:0001580">
    <property type="term" value="P:detection of chemical stimulus involved in sensory perception of bitter taste"/>
    <property type="evidence" value="ECO:0007669"/>
    <property type="project" value="Ensembl"/>
</dbReference>
<dbReference type="GO" id="GO:0035556">
    <property type="term" value="P:intracellular signal transduction"/>
    <property type="evidence" value="ECO:0007669"/>
    <property type="project" value="InterPro"/>
</dbReference>
<dbReference type="GO" id="GO:0016042">
    <property type="term" value="P:lipid catabolic process"/>
    <property type="evidence" value="ECO:0007669"/>
    <property type="project" value="UniProtKB-KW"/>
</dbReference>
<dbReference type="GO" id="GO:0046488">
    <property type="term" value="P:phosphatidylinositol metabolic process"/>
    <property type="evidence" value="ECO:0000250"/>
    <property type="project" value="UniProtKB"/>
</dbReference>
<dbReference type="GO" id="GO:0007200">
    <property type="term" value="P:phospholipase C-activating G protein-coupled receptor signaling pathway"/>
    <property type="evidence" value="ECO:0000315"/>
    <property type="project" value="UniProtKB"/>
</dbReference>
<dbReference type="GO" id="GO:0050913">
    <property type="term" value="P:sensory perception of bitter taste"/>
    <property type="evidence" value="ECO:0000315"/>
    <property type="project" value="MGI"/>
</dbReference>
<dbReference type="CDD" id="cd00275">
    <property type="entry name" value="C2_PLC_like"/>
    <property type="match status" value="1"/>
</dbReference>
<dbReference type="CDD" id="cd16209">
    <property type="entry name" value="EFh_PI-PLCbeta2"/>
    <property type="match status" value="1"/>
</dbReference>
<dbReference type="CDD" id="cd13361">
    <property type="entry name" value="PH_PLC_beta"/>
    <property type="match status" value="1"/>
</dbReference>
<dbReference type="CDD" id="cd08624">
    <property type="entry name" value="PI-PLCc_beta2"/>
    <property type="match status" value="1"/>
</dbReference>
<dbReference type="FunFam" id="1.10.238.10:FF:000024">
    <property type="entry name" value="1-phosphatidylinositol 4,5-bisphosphate phosphodiesterase"/>
    <property type="match status" value="1"/>
</dbReference>
<dbReference type="FunFam" id="2.30.29.240:FF:000002">
    <property type="entry name" value="1-phosphatidylinositol 4,5-bisphosphate phosphodiesterase"/>
    <property type="match status" value="1"/>
</dbReference>
<dbReference type="FunFam" id="2.60.40.150:FF:000105">
    <property type="entry name" value="1-phosphatidylinositol 4,5-bisphosphate phosphodiesterase"/>
    <property type="match status" value="1"/>
</dbReference>
<dbReference type="Gene3D" id="2.30.29.240">
    <property type="match status" value="1"/>
</dbReference>
<dbReference type="Gene3D" id="2.60.40.150">
    <property type="entry name" value="C2 domain"/>
    <property type="match status" value="1"/>
</dbReference>
<dbReference type="Gene3D" id="1.10.238.10">
    <property type="entry name" value="EF-hand"/>
    <property type="match status" value="1"/>
</dbReference>
<dbReference type="Gene3D" id="3.20.20.190">
    <property type="entry name" value="Phosphatidylinositol (PI) phosphodiesterase"/>
    <property type="match status" value="1"/>
</dbReference>
<dbReference type="Gene3D" id="1.20.1230.10">
    <property type="entry name" value="Phospholipase C beta, distal C-terminal domain"/>
    <property type="match status" value="1"/>
</dbReference>
<dbReference type="InterPro" id="IPR000008">
    <property type="entry name" value="C2_dom"/>
</dbReference>
<dbReference type="InterPro" id="IPR035892">
    <property type="entry name" value="C2_domain_sf"/>
</dbReference>
<dbReference type="InterPro" id="IPR011992">
    <property type="entry name" value="EF-hand-dom_pair"/>
</dbReference>
<dbReference type="InterPro" id="IPR001192">
    <property type="entry name" value="PI-PLC_fam"/>
</dbReference>
<dbReference type="InterPro" id="IPR016280">
    <property type="entry name" value="PLC-beta"/>
</dbReference>
<dbReference type="InterPro" id="IPR028403">
    <property type="entry name" value="PLC-beta2_cat"/>
</dbReference>
<dbReference type="InterPro" id="IPR014815">
    <property type="entry name" value="PLC-beta_C"/>
</dbReference>
<dbReference type="InterPro" id="IPR042531">
    <property type="entry name" value="PLC-beta_C_sf"/>
</dbReference>
<dbReference type="InterPro" id="IPR037862">
    <property type="entry name" value="PLC-beta_PH"/>
</dbReference>
<dbReference type="InterPro" id="IPR017946">
    <property type="entry name" value="PLC-like_Pdiesterase_TIM-brl"/>
</dbReference>
<dbReference type="InterPro" id="IPR053945">
    <property type="entry name" value="PLCB1-4-like_EFh"/>
</dbReference>
<dbReference type="InterPro" id="IPR046969">
    <property type="entry name" value="PLCbeta2_EF"/>
</dbReference>
<dbReference type="InterPro" id="IPR000909">
    <property type="entry name" value="PLipase_C_PInositol-sp_X_dom"/>
</dbReference>
<dbReference type="InterPro" id="IPR001711">
    <property type="entry name" value="PLipase_C_Pinositol-sp_Y"/>
</dbReference>
<dbReference type="PANTHER" id="PTHR10336:SF10">
    <property type="entry name" value="1-PHOSPHATIDYLINOSITOL 4,5-BISPHOSPHATE PHOSPHODIESTERASE BETA-2"/>
    <property type="match status" value="1"/>
</dbReference>
<dbReference type="PANTHER" id="PTHR10336">
    <property type="entry name" value="PHOSPHOINOSITIDE-SPECIFIC PHOSPHOLIPASE C FAMILY PROTEIN"/>
    <property type="match status" value="1"/>
</dbReference>
<dbReference type="Pfam" id="PF00168">
    <property type="entry name" value="C2"/>
    <property type="match status" value="1"/>
</dbReference>
<dbReference type="Pfam" id="PF17787">
    <property type="entry name" value="PH_14"/>
    <property type="match status" value="1"/>
</dbReference>
<dbReference type="Pfam" id="PF00388">
    <property type="entry name" value="PI-PLC-X"/>
    <property type="match status" value="1"/>
</dbReference>
<dbReference type="Pfam" id="PF00387">
    <property type="entry name" value="PI-PLC-Y"/>
    <property type="match status" value="1"/>
</dbReference>
<dbReference type="Pfam" id="PF08703">
    <property type="entry name" value="PLC-beta_C"/>
    <property type="match status" value="1"/>
</dbReference>
<dbReference type="Pfam" id="PF22631">
    <property type="entry name" value="PLCB1-4-like_EFh"/>
    <property type="match status" value="1"/>
</dbReference>
<dbReference type="PIRSF" id="PIRSF000956">
    <property type="entry name" value="PLC-beta"/>
    <property type="match status" value="1"/>
</dbReference>
<dbReference type="PRINTS" id="PR00390">
    <property type="entry name" value="PHPHLIPASEC"/>
</dbReference>
<dbReference type="SMART" id="SM00239">
    <property type="entry name" value="C2"/>
    <property type="match status" value="1"/>
</dbReference>
<dbReference type="SMART" id="SM00148">
    <property type="entry name" value="PLCXc"/>
    <property type="match status" value="1"/>
</dbReference>
<dbReference type="SMART" id="SM00149">
    <property type="entry name" value="PLCYc"/>
    <property type="match status" value="1"/>
</dbReference>
<dbReference type="SUPFAM" id="SSF69989">
    <property type="entry name" value="C-terminal domain of PLC-beta"/>
    <property type="match status" value="1"/>
</dbReference>
<dbReference type="SUPFAM" id="SSF49562">
    <property type="entry name" value="C2 domain (Calcium/lipid-binding domain, CaLB)"/>
    <property type="match status" value="1"/>
</dbReference>
<dbReference type="SUPFAM" id="SSF47473">
    <property type="entry name" value="EF-hand"/>
    <property type="match status" value="1"/>
</dbReference>
<dbReference type="SUPFAM" id="SSF50729">
    <property type="entry name" value="PH domain-like"/>
    <property type="match status" value="1"/>
</dbReference>
<dbReference type="SUPFAM" id="SSF51695">
    <property type="entry name" value="PLC-like phosphodiesterases"/>
    <property type="match status" value="1"/>
</dbReference>
<dbReference type="PROSITE" id="PS50004">
    <property type="entry name" value="C2"/>
    <property type="match status" value="1"/>
</dbReference>
<dbReference type="PROSITE" id="PS50007">
    <property type="entry name" value="PIPLC_X_DOMAIN"/>
    <property type="match status" value="1"/>
</dbReference>
<dbReference type="PROSITE" id="PS50008">
    <property type="entry name" value="PIPLC_Y_DOMAIN"/>
    <property type="match status" value="1"/>
</dbReference>
<keyword id="KW-0025">Alternative splicing</keyword>
<keyword id="KW-0106">Calcium</keyword>
<keyword id="KW-0175">Coiled coil</keyword>
<keyword id="KW-0378">Hydrolase</keyword>
<keyword id="KW-0442">Lipid degradation</keyword>
<keyword id="KW-0443">Lipid metabolism</keyword>
<keyword id="KW-0479">Metal-binding</keyword>
<keyword id="KW-0597">Phosphoprotein</keyword>
<keyword id="KW-1185">Reference proteome</keyword>
<keyword id="KW-0807">Transducer</keyword>
<feature type="chain" id="PRO_0000295683" description="1-phosphatidylinositol 4,5-bisphosphate phosphodiesterase beta-2">
    <location>
        <begin position="1"/>
        <end position="1181"/>
    </location>
</feature>
<feature type="domain" description="PI-PLC X-box" evidence="5">
    <location>
        <begin position="312"/>
        <end position="463"/>
    </location>
</feature>
<feature type="domain" description="PI-PLC Y-box" evidence="6">
    <location>
        <begin position="547"/>
        <end position="663"/>
    </location>
</feature>
<feature type="domain" description="C2" evidence="4">
    <location>
        <begin position="666"/>
        <end position="791"/>
    </location>
</feature>
<feature type="region of interest" description="Disordered" evidence="7">
    <location>
        <begin position="465"/>
        <end position="534"/>
    </location>
</feature>
<feature type="region of interest" description="Disordered" evidence="7">
    <location>
        <begin position="847"/>
        <end position="890"/>
    </location>
</feature>
<feature type="region of interest" description="Disordered" evidence="7">
    <location>
        <begin position="1149"/>
        <end position="1181"/>
    </location>
</feature>
<feature type="coiled-coil region" evidence="3">
    <location>
        <begin position="893"/>
        <end position="940"/>
    </location>
</feature>
<feature type="coiled-coil region" evidence="3">
    <location>
        <begin position="974"/>
        <end position="1026"/>
    </location>
</feature>
<feature type="coiled-coil region" evidence="3">
    <location>
        <begin position="1075"/>
        <end position="1141"/>
    </location>
</feature>
<feature type="compositionally biased region" description="Acidic residues" evidence="7">
    <location>
        <begin position="503"/>
        <end position="525"/>
    </location>
</feature>
<feature type="compositionally biased region" description="Polar residues" evidence="7">
    <location>
        <begin position="850"/>
        <end position="869"/>
    </location>
</feature>
<feature type="compositionally biased region" description="Basic and acidic residues" evidence="7">
    <location>
        <begin position="874"/>
        <end position="883"/>
    </location>
</feature>
<feature type="compositionally biased region" description="Basic and acidic residues" evidence="7">
    <location>
        <begin position="1150"/>
        <end position="1159"/>
    </location>
</feature>
<feature type="active site" evidence="5">
    <location>
        <position position="327"/>
    </location>
</feature>
<feature type="active site" evidence="5">
    <location>
        <position position="374"/>
    </location>
</feature>
<feature type="binding site" evidence="1">
    <location>
        <position position="328"/>
    </location>
    <ligand>
        <name>Ca(2+)</name>
        <dbReference type="ChEBI" id="CHEBI:29108"/>
    </ligand>
</feature>
<feature type="binding site" evidence="1">
    <location>
        <position position="357"/>
    </location>
    <ligand>
        <name>Ca(2+)</name>
        <dbReference type="ChEBI" id="CHEBI:29108"/>
    </ligand>
</feature>
<feature type="binding site" evidence="1">
    <location>
        <position position="359"/>
    </location>
    <ligand>
        <name>Ca(2+)</name>
        <dbReference type="ChEBI" id="CHEBI:29108"/>
    </ligand>
</feature>
<feature type="binding site" evidence="1">
    <location>
        <position position="408"/>
    </location>
    <ligand>
        <name>Ca(2+)</name>
        <dbReference type="ChEBI" id="CHEBI:29108"/>
    </ligand>
</feature>
<feature type="modified residue" description="Phosphoserine" evidence="2">
    <location>
        <position position="950"/>
    </location>
</feature>
<feature type="splice variant" id="VSP_026981" description="In isoform 4." evidence="9">
    <location>
        <begin position="1"/>
        <end position="55"/>
    </location>
</feature>
<feature type="splice variant" id="VSP_026982" description="In isoform 2." evidence="9">
    <location>
        <begin position="55"/>
        <end position="77"/>
    </location>
</feature>
<feature type="splice variant" id="VSP_026983" description="In isoform 4." evidence="9">
    <original>DLPMQQNMALFEFNGQSGYLLKHEFMRRLDKQFNPFSVDRIDVVVATTLSIT</original>
    <variation>GKNTSKTREPSPGPLTTSPEPSPGPCIPRCPPSEPSSGPCLSDPYSSLDKEL</variation>
    <location>
        <begin position="637"/>
        <end position="688"/>
    </location>
</feature>
<feature type="splice variant" id="VSP_026984" description="In isoform 4." evidence="9">
    <location>
        <begin position="689"/>
        <end position="1181"/>
    </location>
</feature>
<feature type="splice variant" id="VSP_026985" description="In isoform 2 and isoform 3." evidence="9">
    <original>IISGQFLSERSVRT</original>
    <variation>ARPRADKWLGGLGS</variation>
    <location>
        <begin position="689"/>
        <end position="702"/>
    </location>
</feature>
<feature type="splice variant" id="VSP_026986" description="In isoform 2 and isoform 3." evidence="9">
    <location>
        <begin position="703"/>
        <end position="1181"/>
    </location>
</feature>
<reference key="1">
    <citation type="submission" date="2005-01" db="EMBL/GenBank/DDBJ databases">
        <title>Characterization of quantitative trait loci influencing growth and adiposity using congenic mouse strains.</title>
        <authorList>
            <person name="Farber C.R."/>
            <person name="Corva P.M."/>
            <person name="Medrano J.F."/>
        </authorList>
    </citation>
    <scope>NUCLEOTIDE SEQUENCE [GENOMIC DNA] (ISOFORM 3)</scope>
</reference>
<reference key="2">
    <citation type="journal article" date="2005" name="Science">
        <title>The transcriptional landscape of the mammalian genome.</title>
        <authorList>
            <person name="Carninci P."/>
            <person name="Kasukawa T."/>
            <person name="Katayama S."/>
            <person name="Gough J."/>
            <person name="Frith M.C."/>
            <person name="Maeda N."/>
            <person name="Oyama R."/>
            <person name="Ravasi T."/>
            <person name="Lenhard B."/>
            <person name="Wells C."/>
            <person name="Kodzius R."/>
            <person name="Shimokawa K."/>
            <person name="Bajic V.B."/>
            <person name="Brenner S.E."/>
            <person name="Batalov S."/>
            <person name="Forrest A.R."/>
            <person name="Zavolan M."/>
            <person name="Davis M.J."/>
            <person name="Wilming L.G."/>
            <person name="Aidinis V."/>
            <person name="Allen J.E."/>
            <person name="Ambesi-Impiombato A."/>
            <person name="Apweiler R."/>
            <person name="Aturaliya R.N."/>
            <person name="Bailey T.L."/>
            <person name="Bansal M."/>
            <person name="Baxter L."/>
            <person name="Beisel K.W."/>
            <person name="Bersano T."/>
            <person name="Bono H."/>
            <person name="Chalk A.M."/>
            <person name="Chiu K.P."/>
            <person name="Choudhary V."/>
            <person name="Christoffels A."/>
            <person name="Clutterbuck D.R."/>
            <person name="Crowe M.L."/>
            <person name="Dalla E."/>
            <person name="Dalrymple B.P."/>
            <person name="de Bono B."/>
            <person name="Della Gatta G."/>
            <person name="di Bernardo D."/>
            <person name="Down T."/>
            <person name="Engstrom P."/>
            <person name="Fagiolini M."/>
            <person name="Faulkner G."/>
            <person name="Fletcher C.F."/>
            <person name="Fukushima T."/>
            <person name="Furuno M."/>
            <person name="Futaki S."/>
            <person name="Gariboldi M."/>
            <person name="Georgii-Hemming P."/>
            <person name="Gingeras T.R."/>
            <person name="Gojobori T."/>
            <person name="Green R.E."/>
            <person name="Gustincich S."/>
            <person name="Harbers M."/>
            <person name="Hayashi Y."/>
            <person name="Hensch T.K."/>
            <person name="Hirokawa N."/>
            <person name="Hill D."/>
            <person name="Huminiecki L."/>
            <person name="Iacono M."/>
            <person name="Ikeo K."/>
            <person name="Iwama A."/>
            <person name="Ishikawa T."/>
            <person name="Jakt M."/>
            <person name="Kanapin A."/>
            <person name="Katoh M."/>
            <person name="Kawasawa Y."/>
            <person name="Kelso J."/>
            <person name="Kitamura H."/>
            <person name="Kitano H."/>
            <person name="Kollias G."/>
            <person name="Krishnan S.P."/>
            <person name="Kruger A."/>
            <person name="Kummerfeld S.K."/>
            <person name="Kurochkin I.V."/>
            <person name="Lareau L.F."/>
            <person name="Lazarevic D."/>
            <person name="Lipovich L."/>
            <person name="Liu J."/>
            <person name="Liuni S."/>
            <person name="McWilliam S."/>
            <person name="Madan Babu M."/>
            <person name="Madera M."/>
            <person name="Marchionni L."/>
            <person name="Matsuda H."/>
            <person name="Matsuzawa S."/>
            <person name="Miki H."/>
            <person name="Mignone F."/>
            <person name="Miyake S."/>
            <person name="Morris K."/>
            <person name="Mottagui-Tabar S."/>
            <person name="Mulder N."/>
            <person name="Nakano N."/>
            <person name="Nakauchi H."/>
            <person name="Ng P."/>
            <person name="Nilsson R."/>
            <person name="Nishiguchi S."/>
            <person name="Nishikawa S."/>
            <person name="Nori F."/>
            <person name="Ohara O."/>
            <person name="Okazaki Y."/>
            <person name="Orlando V."/>
            <person name="Pang K.C."/>
            <person name="Pavan W.J."/>
            <person name="Pavesi G."/>
            <person name="Pesole G."/>
            <person name="Petrovsky N."/>
            <person name="Piazza S."/>
            <person name="Reed J."/>
            <person name="Reid J.F."/>
            <person name="Ring B.Z."/>
            <person name="Ringwald M."/>
            <person name="Rost B."/>
            <person name="Ruan Y."/>
            <person name="Salzberg S.L."/>
            <person name="Sandelin A."/>
            <person name="Schneider C."/>
            <person name="Schoenbach C."/>
            <person name="Sekiguchi K."/>
            <person name="Semple C.A."/>
            <person name="Seno S."/>
            <person name="Sessa L."/>
            <person name="Sheng Y."/>
            <person name="Shibata Y."/>
            <person name="Shimada H."/>
            <person name="Shimada K."/>
            <person name="Silva D."/>
            <person name="Sinclair B."/>
            <person name="Sperling S."/>
            <person name="Stupka E."/>
            <person name="Sugiura K."/>
            <person name="Sultana R."/>
            <person name="Takenaka Y."/>
            <person name="Taki K."/>
            <person name="Tammoja K."/>
            <person name="Tan S.L."/>
            <person name="Tang S."/>
            <person name="Taylor M.S."/>
            <person name="Tegner J."/>
            <person name="Teichmann S.A."/>
            <person name="Ueda H.R."/>
            <person name="van Nimwegen E."/>
            <person name="Verardo R."/>
            <person name="Wei C.L."/>
            <person name="Yagi K."/>
            <person name="Yamanishi H."/>
            <person name="Zabarovsky E."/>
            <person name="Zhu S."/>
            <person name="Zimmer A."/>
            <person name="Hide W."/>
            <person name="Bult C."/>
            <person name="Grimmond S.M."/>
            <person name="Teasdale R.D."/>
            <person name="Liu E.T."/>
            <person name="Brusic V."/>
            <person name="Quackenbush J."/>
            <person name="Wahlestedt C."/>
            <person name="Mattick J.S."/>
            <person name="Hume D.A."/>
            <person name="Kai C."/>
            <person name="Sasaki D."/>
            <person name="Tomaru Y."/>
            <person name="Fukuda S."/>
            <person name="Kanamori-Katayama M."/>
            <person name="Suzuki M."/>
            <person name="Aoki J."/>
            <person name="Arakawa T."/>
            <person name="Iida J."/>
            <person name="Imamura K."/>
            <person name="Itoh M."/>
            <person name="Kato T."/>
            <person name="Kawaji H."/>
            <person name="Kawagashira N."/>
            <person name="Kawashima T."/>
            <person name="Kojima M."/>
            <person name="Kondo S."/>
            <person name="Konno H."/>
            <person name="Nakano K."/>
            <person name="Ninomiya N."/>
            <person name="Nishio T."/>
            <person name="Okada M."/>
            <person name="Plessy C."/>
            <person name="Shibata K."/>
            <person name="Shiraki T."/>
            <person name="Suzuki S."/>
            <person name="Tagami M."/>
            <person name="Waki K."/>
            <person name="Watahiki A."/>
            <person name="Okamura-Oho Y."/>
            <person name="Suzuki H."/>
            <person name="Kawai J."/>
            <person name="Hayashizaki Y."/>
        </authorList>
    </citation>
    <scope>NUCLEOTIDE SEQUENCE [LARGE SCALE MRNA] (ISOFORMS 2 AND 4)</scope>
    <source>
        <strain>C57BL/6J</strain>
        <tissue>Corpora quadrigemina</tissue>
        <tissue>Thymus</tissue>
    </source>
</reference>
<reference key="3">
    <citation type="journal article" date="2009" name="PLoS Biol.">
        <title>Lineage-specific biology revealed by a finished genome assembly of the mouse.</title>
        <authorList>
            <person name="Church D.M."/>
            <person name="Goodstadt L."/>
            <person name="Hillier L.W."/>
            <person name="Zody M.C."/>
            <person name="Goldstein S."/>
            <person name="She X."/>
            <person name="Bult C.J."/>
            <person name="Agarwala R."/>
            <person name="Cherry J.L."/>
            <person name="DiCuccio M."/>
            <person name="Hlavina W."/>
            <person name="Kapustin Y."/>
            <person name="Meric P."/>
            <person name="Maglott D."/>
            <person name="Birtle Z."/>
            <person name="Marques A.C."/>
            <person name="Graves T."/>
            <person name="Zhou S."/>
            <person name="Teague B."/>
            <person name="Potamousis K."/>
            <person name="Churas C."/>
            <person name="Place M."/>
            <person name="Herschleb J."/>
            <person name="Runnheim R."/>
            <person name="Forrest D."/>
            <person name="Amos-Landgraf J."/>
            <person name="Schwartz D.C."/>
            <person name="Cheng Z."/>
            <person name="Lindblad-Toh K."/>
            <person name="Eichler E.E."/>
            <person name="Ponting C.P."/>
        </authorList>
    </citation>
    <scope>NUCLEOTIDE SEQUENCE [LARGE SCALE GENOMIC DNA]</scope>
    <scope>ALTERNATIVE SPLICING</scope>
    <source>
        <strain>C57BL/6J</strain>
    </source>
</reference>
<reference key="4">
    <citation type="journal article" date="2010" name="Cell">
        <title>A tissue-specific atlas of mouse protein phosphorylation and expression.</title>
        <authorList>
            <person name="Huttlin E.L."/>
            <person name="Jedrychowski M.P."/>
            <person name="Elias J.E."/>
            <person name="Goswami T."/>
            <person name="Rad R."/>
            <person name="Beausoleil S.A."/>
            <person name="Villen J."/>
            <person name="Haas W."/>
            <person name="Sowa M.E."/>
            <person name="Gygi S.P."/>
        </authorList>
    </citation>
    <scope>IDENTIFICATION BY MASS SPECTROMETRY [LARGE SCALE ANALYSIS]</scope>
    <source>
        <tissue>Spleen</tissue>
    </source>
</reference>
<reference key="5">
    <citation type="journal article" date="2012" name="EMBO J.">
        <title>GPCR activation of Ras and PI3Kc in neutrophils depends on PLCb2/b3 and the RasGEF RasGRP4.</title>
        <authorList>
            <person name="Suire S."/>
            <person name="Lecureuil C."/>
            <person name="Anderson K.E."/>
            <person name="Damoulakis G."/>
            <person name="Niewczas I."/>
            <person name="Davidson K."/>
            <person name="Guillou H."/>
            <person name="Pan D."/>
            <person name="Clark J."/>
            <person name="Hawkins P.T."/>
            <person name="Stephens L."/>
        </authorList>
    </citation>
    <scope>FUNCTION</scope>
</reference>
<organism>
    <name type="scientific">Mus musculus</name>
    <name type="common">Mouse</name>
    <dbReference type="NCBI Taxonomy" id="10090"/>
    <lineage>
        <taxon>Eukaryota</taxon>
        <taxon>Metazoa</taxon>
        <taxon>Chordata</taxon>
        <taxon>Craniata</taxon>
        <taxon>Vertebrata</taxon>
        <taxon>Euteleostomi</taxon>
        <taxon>Mammalia</taxon>
        <taxon>Eutheria</taxon>
        <taxon>Euarchontoglires</taxon>
        <taxon>Glires</taxon>
        <taxon>Rodentia</taxon>
        <taxon>Myomorpha</taxon>
        <taxon>Muroidea</taxon>
        <taxon>Muridae</taxon>
        <taxon>Murinae</taxon>
        <taxon>Mus</taxon>
        <taxon>Mus</taxon>
    </lineage>
</organism>
<accession>A3KGF7</accession>
<accession>Q2M4J1</accession>
<accession>Q3TER8</accession>
<accession>Q8BI81</accession>
<sequence>MSLLNPVLLPPNVKAYLSQGERFIKWDDETSIASPVILRVDPKGYYLYWTYQNQEMEFLDVTSIRDTRFGKFAKIPKSQKLREVFNMDFPDNHFLLKTLTVVSGPDMVDLTFYNFVSYKENVGKDWAEDVLALAKHPMTVNAPRSTFLDKILVKLKMQLNPEGKIPVKNFFQMFPADRKRVEAALGACHLAKGKNDAINPEDFPESVYKSFLMSLCPRPEIDEIFTSYHSKAKPYMTKEHLTKFINQKQRDPRLNSLLFPPARPEQVQVLIDKYEPSGINVQRGQLSPEGMVWFLCGPENSVLAHDTLLIHQDMTQPLNHYFINSSHNTYLTAGQFSGLSSAEMYRQVLLSGCRCVELDCWKGKPPDEEPIITHGFTMTTDILFKEAIEAIAESAFKTSPYPVILSFENHVDSPRQQAKMAEYCRSMFGETLLTDPLENFPLKPGIPLPSPEDLRGKILIKNKKNQFSGPASPSKKPGGVAEGSLPSSVPVEEDTGWTAEDRTEVEEEEVVEEEEEEESGNLDEEEIKKMQSDEGTAGLEVTAYEEMSSLVNYIQPTKFISFEFSAQKNRSYVVSSFTELKAYELLSKASMQFVDYNKRQMSRVYPKGTRMDSSNYMPQMFWNAGCQMVALNFQTMDLPMQQNMALFEFNGQSGYLLKHEFMRRLDKQFNPFSVDRIDVVVATTLSITIISGQFLSERSVRTYVEVELFGLPGDPKRRYRTKLSPTANSINPVWKEEPFIFEKILMPELASLRIAVMEEGSKFLGHRIIPINALHSGYHHLCLRSESNMALTMPALFVFLEMKDYIPDTWADLTVALANPIKYFNAQDKKSVKLKGVTGSLPEKLFSGTPVASQSNGAPVSAGNGSTAPGTKATGEEATKEVTEPQTASLEELRELKGVVKLQRRHEKELRELERRGARRWEELLQRGAAQLAELQTQAAGCKLRPGKGSRKKRTLPCEETVVAPSEPHDRADPRVQELKDRLEQELQQQGEEQYRSVLKRKEQHVTEQIAKMMELAREKQAAELKTFKETSETDTKEMKKKLEAKRLERIQAMTKVTTDKVAQERLKREINNSHIQEVVQAVKQMTETLERHQEKLEERQTACLEQIQAMEKQFQEKALAEYEAKMKGLEAEVKESVRAYFKDCFPTEAEDKPERSCEASEESCPQEPLVSKADTQESRL</sequence>
<protein>
    <recommendedName>
        <fullName evidence="10">1-phosphatidylinositol 4,5-bisphosphate phosphodiesterase beta-2</fullName>
        <ecNumber evidence="2">3.1.4.11</ecNumber>
    </recommendedName>
    <alternativeName>
        <fullName>Phosphoinositide phospholipase C-beta-2</fullName>
    </alternativeName>
    <alternativeName>
        <fullName>Phospholipase C-beta-2</fullName>
        <shortName>PLC-beta-2</shortName>
    </alternativeName>
</protein>
<comment type="function">
    <text evidence="2 8">The production of the second messenger molecules diacylglycerol (DAG) and inositol 1,4,5-trisphosphate (IP3) is mediated by activated phosphatidylinositol-specific phospholipase C enzymes (By similarity). In neutrophils, participates in a phospholipase C-activating N-formyl peptide-activated GPCR (G protein-coupled receptor) signaling pathway by promoting RASGRP4 activation by DAG, to promote neutrophil functional responses (PubMed:22728827).</text>
</comment>
<comment type="catalytic activity">
    <reaction evidence="2">
        <text>a 1,2-diacyl-sn-glycero-3-phospho-(1D-myo-inositol-4,5-bisphosphate) + H2O = 1D-myo-inositol 1,4,5-trisphosphate + a 1,2-diacyl-sn-glycerol + H(+)</text>
        <dbReference type="Rhea" id="RHEA:33179"/>
        <dbReference type="ChEBI" id="CHEBI:15377"/>
        <dbReference type="ChEBI" id="CHEBI:15378"/>
        <dbReference type="ChEBI" id="CHEBI:17815"/>
        <dbReference type="ChEBI" id="CHEBI:58456"/>
        <dbReference type="ChEBI" id="CHEBI:203600"/>
        <dbReference type="EC" id="3.1.4.11"/>
    </reaction>
    <physiologicalReaction direction="left-to-right" evidence="2">
        <dbReference type="Rhea" id="RHEA:33180"/>
    </physiologicalReaction>
</comment>
<comment type="catalytic activity">
    <reaction evidence="2">
        <text>a 1,2-diacyl-sn-glycero-3-phospho-(1D-myo-inositol) + H2O = 1D-myo-inositol 1-phosphate + a 1,2-diacyl-sn-glycerol + H(+)</text>
        <dbReference type="Rhea" id="RHEA:43484"/>
        <dbReference type="ChEBI" id="CHEBI:15377"/>
        <dbReference type="ChEBI" id="CHEBI:15378"/>
        <dbReference type="ChEBI" id="CHEBI:17815"/>
        <dbReference type="ChEBI" id="CHEBI:57880"/>
        <dbReference type="ChEBI" id="CHEBI:58433"/>
    </reaction>
    <physiologicalReaction direction="left-to-right" evidence="2">
        <dbReference type="Rhea" id="RHEA:43485"/>
    </physiologicalReaction>
</comment>
<comment type="cofactor">
    <cofactor evidence="1">
        <name>Ca(2+)</name>
        <dbReference type="ChEBI" id="CHEBI:29108"/>
    </cofactor>
    <text evidence="1">Binds 1 Ca(2+) ion per subunit.</text>
</comment>
<comment type="subunit">
    <text evidence="2">Interacts with RAC1. Forms a complex composed of at least WDR26, a G-beta:gamma unit, and PLCB2.</text>
</comment>
<comment type="alternative products">
    <event type="alternative splicing"/>
    <isoform>
        <id>A3KGF7-1</id>
        <name>1</name>
        <sequence type="displayed"/>
    </isoform>
    <isoform>
        <id>A3KGF7-2</id>
        <name>2</name>
        <sequence type="described" ref="VSP_026982 VSP_026985 VSP_026986"/>
    </isoform>
    <isoform>
        <id>A3KGF7-3</id>
        <name>3</name>
        <sequence type="described" ref="VSP_026985 VSP_026986"/>
    </isoform>
    <isoform>
        <id>A3KGF7-4</id>
        <name>4</name>
        <sequence type="described" ref="VSP_026981 VSP_026983 VSP_026984"/>
    </isoform>
</comment>
<comment type="miscellaneous">
    <text evidence="1">The receptor-mediated activation of PLC-beta-2 is most effectively mediated by one G-protein alpha subunit, alpha-16.</text>
</comment>
<name>PLCB2_MOUSE</name>
<evidence type="ECO:0000250" key="1"/>
<evidence type="ECO:0000250" key="2">
    <source>
        <dbReference type="UniProtKB" id="Q00722"/>
    </source>
</evidence>
<evidence type="ECO:0000255" key="3"/>
<evidence type="ECO:0000255" key="4">
    <source>
        <dbReference type="PROSITE-ProRule" id="PRU00041"/>
    </source>
</evidence>
<evidence type="ECO:0000255" key="5">
    <source>
        <dbReference type="PROSITE-ProRule" id="PRU00270"/>
    </source>
</evidence>
<evidence type="ECO:0000255" key="6">
    <source>
        <dbReference type="PROSITE-ProRule" id="PRU00271"/>
    </source>
</evidence>
<evidence type="ECO:0000256" key="7">
    <source>
        <dbReference type="SAM" id="MobiDB-lite"/>
    </source>
</evidence>
<evidence type="ECO:0000269" key="8">
    <source>
    </source>
</evidence>
<evidence type="ECO:0000303" key="9">
    <source>
    </source>
</evidence>
<evidence type="ECO:0000305" key="10"/>
<evidence type="ECO:0000312" key="11">
    <source>
        <dbReference type="MGI" id="MGI:107465"/>
    </source>
</evidence>